<organism>
    <name type="scientific">Homo sapiens</name>
    <name type="common">Human</name>
    <dbReference type="NCBI Taxonomy" id="9606"/>
    <lineage>
        <taxon>Eukaryota</taxon>
        <taxon>Metazoa</taxon>
        <taxon>Chordata</taxon>
        <taxon>Craniata</taxon>
        <taxon>Vertebrata</taxon>
        <taxon>Euteleostomi</taxon>
        <taxon>Mammalia</taxon>
        <taxon>Eutheria</taxon>
        <taxon>Euarchontoglires</taxon>
        <taxon>Primates</taxon>
        <taxon>Haplorrhini</taxon>
        <taxon>Catarrhini</taxon>
        <taxon>Hominidae</taxon>
        <taxon>Homo</taxon>
    </lineage>
</organism>
<gene>
    <name type="primary">MMP19</name>
    <name type="synonym">MMP18</name>
    <name type="synonym">RASI</name>
</gene>
<comment type="function">
    <text evidence="5 6">Endopeptidase that degrades various components of the extracellular matrix, such as aggrecan and cartilage oligomeric matrix protein (comp), during development, haemostasis and pathological conditions (arthritic disease). May also play a role in neovascularization or angiogenesis. Hydrolyzes collagen type IV, laminin, nidogen, nascin-C isoform, fibronectin, and type I gelatin.</text>
</comment>
<comment type="cofactor">
    <cofactor evidence="1">
        <name>Zn(2+)</name>
        <dbReference type="ChEBI" id="CHEBI:29105"/>
    </cofactor>
    <text evidence="1">Binds 1 zinc ion per subunit.</text>
</comment>
<comment type="cofactor">
    <cofactor evidence="1">
        <name>Ca(2+)</name>
        <dbReference type="ChEBI" id="CHEBI:29108"/>
    </cofactor>
</comment>
<comment type="activity regulation">
    <text>Strongly inhibited by TIMP-2, TIMP-3 and TIMP-4, while TIMP-1 is less efficient.</text>
</comment>
<comment type="subcellular location">
    <subcellularLocation>
        <location evidence="1">Secreted</location>
        <location evidence="1">Extracellular space</location>
        <location evidence="1">Extracellular matrix</location>
    </subcellularLocation>
</comment>
<comment type="alternative products">
    <event type="alternative splicing"/>
    <isoform>
        <id>Q99542-1</id>
        <name>1</name>
        <name>RASI-1</name>
        <name>RASI-11</name>
        <sequence type="displayed"/>
    </isoform>
    <isoform>
        <id>Q99542-3</id>
        <name>2</name>
        <name>RASI-9</name>
        <sequence type="described" ref="VSP_005457 VSP_005458"/>
    </isoform>
    <isoform>
        <id>Q99542-4</id>
        <name>3</name>
        <name>RASI-6</name>
        <sequence type="described" ref="VSP_041893 VSP_041894"/>
    </isoform>
    <isoform>
        <id>Q99542-5</id>
        <name>4</name>
        <sequence type="described" ref="VSP_054573 VSP_054574 VSP_054575"/>
    </isoform>
</comment>
<comment type="tissue specificity">
    <text evidence="9">Expressed in mammary gland, placenta, lung, pancreas, ovary, small intestine, spleen, thymus, prostate, testis colon, heart and blood vessel walls. Not detected in brain and peripheral blood leukocytes. Also expressed in the synovial fluid of normal and rheumatoid patients (PubMed:8920941).</text>
</comment>
<comment type="domain">
    <text>The conserved cysteine present in the cysteine-switch motif binds the catalytic zinc ion, thus inhibiting the enzyme. The dissociation of the cysteine from the zinc ion upon the activation-peptide release activates the enzyme.</text>
</comment>
<comment type="PTM">
    <text>Activated by autolytic cleavage after Lys-97.</text>
</comment>
<comment type="PTM">
    <text evidence="7">Tyrosine phosphorylated by PKDCC/VLK.</text>
</comment>
<comment type="disease" evidence="8">
    <disease id="DI-04537">
        <name>Cavitary optic disc anomalies</name>
        <acronym>CODA</acronym>
        <description>An ocular disease characterized by a profound excavation of the optic nerve. Clinical phenotype is variable and includes congenitally excavated optic nerves as well as other features of optic pit, optic nerve coloboma, and morning glory disk anomaly. Patients with CODA have a strong predilection for retinal detachment and/or separation of the retinal layers (retinoschisis) that lead to profound central vision loss.</description>
        <dbReference type="MIM" id="611543"/>
    </disease>
    <text>The disease is caused by variants affecting the gene represented in this entry.</text>
</comment>
<comment type="miscellaneous">
    <text evidence="10">Autoantigen anti-MMP19 are frequent in RA patients.</text>
</comment>
<comment type="miscellaneous">
    <molecule>Isoform 3</molecule>
    <text evidence="14">May be produced at very low levels due to a premature stop codon in the mRNA, leading to nonsense-mediated mRNA decay.</text>
</comment>
<comment type="similarity">
    <text evidence="14">Belongs to the peptidase M10A family.</text>
</comment>
<comment type="sequence caution" evidence="14">
    <conflict type="erroneous translation">
        <sequence resource="EMBL-CDS" id="AAC99995"/>
    </conflict>
    <text>Wrong choice of CDS.</text>
</comment>
<feature type="signal peptide" evidence="2">
    <location>
        <begin position="1"/>
        <end position="18"/>
    </location>
</feature>
<feature type="propeptide" id="PRO_0000028826" evidence="5">
    <location>
        <begin position="19"/>
        <end position="97"/>
    </location>
</feature>
<feature type="chain" id="PRO_0000028827" description="Matrix metalloproteinase-19">
    <location>
        <begin position="98"/>
        <end position="508"/>
    </location>
</feature>
<feature type="repeat" description="Hemopexin 1">
    <location>
        <begin position="286"/>
        <end position="333"/>
    </location>
</feature>
<feature type="repeat" description="Hemopexin 2">
    <location>
        <begin position="334"/>
        <end position="380"/>
    </location>
</feature>
<feature type="repeat" description="Hemopexin 3">
    <location>
        <begin position="381"/>
        <end position="425"/>
    </location>
</feature>
<feature type="repeat" description="Hemopexin 4">
    <location>
        <begin position="426"/>
        <end position="472"/>
    </location>
</feature>
<feature type="region of interest" description="Disordered" evidence="4">
    <location>
        <begin position="262"/>
        <end position="288"/>
    </location>
</feature>
<feature type="short sequence motif" description="Cysteine switch" evidence="1">
    <location>
        <begin position="83"/>
        <end position="90"/>
    </location>
</feature>
<feature type="compositionally biased region" description="Pro residues" evidence="4">
    <location>
        <begin position="274"/>
        <end position="287"/>
    </location>
</feature>
<feature type="active site" evidence="3">
    <location>
        <position position="213"/>
    </location>
</feature>
<feature type="binding site" description="in inhibited form" evidence="1">
    <location>
        <position position="85"/>
    </location>
    <ligand>
        <name>Zn(2+)</name>
        <dbReference type="ChEBI" id="CHEBI:29105"/>
        <note>catalytic</note>
    </ligand>
</feature>
<feature type="binding site" evidence="3">
    <location>
        <position position="212"/>
    </location>
    <ligand>
        <name>Zn(2+)</name>
        <dbReference type="ChEBI" id="CHEBI:29105"/>
        <note>catalytic</note>
    </ligand>
</feature>
<feature type="binding site" evidence="3">
    <location>
        <position position="216"/>
    </location>
    <ligand>
        <name>Zn(2+)</name>
        <dbReference type="ChEBI" id="CHEBI:29105"/>
        <note>catalytic</note>
    </ligand>
</feature>
<feature type="binding site" evidence="3">
    <location>
        <position position="222"/>
    </location>
    <ligand>
        <name>Zn(2+)</name>
        <dbReference type="ChEBI" id="CHEBI:29105"/>
        <note>catalytic</note>
    </ligand>
</feature>
<feature type="glycosylation site" description="N-linked (GlcNAc...) asparagine" evidence="2">
    <location>
        <position position="464"/>
    </location>
</feature>
<feature type="disulfide bond" evidence="1">
    <location>
        <begin position="289"/>
        <end position="472"/>
    </location>
</feature>
<feature type="splice variant" id="VSP_005457" description="In isoform 2." evidence="13">
    <location>
        <begin position="1"/>
        <end position="286"/>
    </location>
</feature>
<feature type="splice variant" id="VSP_041893" description="In isoform 3." evidence="13">
    <original>RAFQEA</original>
    <variation>SLRSAG</variation>
    <location>
        <begin position="58"/>
        <end position="63"/>
    </location>
</feature>
<feature type="splice variant" id="VSP_041894" description="In isoform 3." evidence="13">
    <location>
        <begin position="64"/>
        <end position="508"/>
    </location>
</feature>
<feature type="splice variant" id="VSP_054573" description="In isoform 4." evidence="12">
    <location>
        <begin position="174"/>
        <end position="255"/>
    </location>
</feature>
<feature type="splice variant" id="VSP_005458" description="In isoform 2." evidence="13">
    <original>DPCSSELDAMML</original>
    <variation>MGVTWDFSMSNG</variation>
    <location>
        <begin position="287"/>
        <end position="298"/>
    </location>
</feature>
<feature type="splice variant" id="VSP_054574" description="In isoform 4." evidence="12">
    <original>PRGKTYAFKGDYVWTVSDSGPGPLFRVSALWEGLPGNLDAAVYSPRTQWIHFFKGDKVWRYINFKMSPGFPKKLNRVEPNLDAALYWP</original>
    <variation>EAPPLQAVGRRWGQPADPEAWTNGSDMGLQHEQWRAPWEDLCFQGGLCVDCIRFRTGPLVPSVCPLGGAPRKPGCCCLLASNTMDSLL</variation>
    <location>
        <begin position="300"/>
        <end position="387"/>
    </location>
</feature>
<feature type="splice variant" id="VSP_054575" description="In isoform 4." evidence="12">
    <location>
        <begin position="388"/>
        <end position="508"/>
    </location>
</feature>
<feature type="sequence variant" id="VAR_021036" description="In dbSNP:rs17844794." evidence="11">
    <original>R</original>
    <variation>C</variation>
    <location>
        <position position="103"/>
    </location>
</feature>
<feature type="sequence variant" id="VAR_054006" description="In dbSNP:rs1056784.">
    <original>P</original>
    <variation>S</variation>
    <location>
        <position position="245"/>
    </location>
</feature>
<feature type="sequence variant" id="VAR_021037" description="In dbSNP:rs17118042." evidence="11">
    <original>P</original>
    <variation>T</variation>
    <location>
        <position position="488"/>
    </location>
</feature>
<feature type="sequence variant" id="VAR_021038" description="In dbSNP:rs17844806." evidence="11">
    <original>T</original>
    <variation>M</variation>
    <location>
        <position position="491"/>
    </location>
</feature>
<feature type="mutagenesis site" description="Reduced autolysis rate." evidence="5">
    <original>E</original>
    <variation>P</variation>
    <location>
        <position position="88"/>
    </location>
</feature>
<feature type="mutagenesis site" description="Reduced autolysis rate." evidence="5">
    <original>P</original>
    <variation>V</variation>
    <location>
        <position position="90"/>
    </location>
</feature>
<feature type="sequence conflict" description="In Ref. 1; CAA69913." evidence="14" ref="1">
    <original>V</original>
    <variation>S</variation>
    <location>
        <position position="376"/>
    </location>
</feature>
<reference key="1">
    <citation type="journal article" date="1996" name="Biochem. Biophys. Res. Commun.">
        <title>Identification of MMP-18, a putative novel human matrix metalloproteinase.</title>
        <authorList>
            <person name="Cossins J."/>
            <person name="Dudgeon T.J."/>
            <person name="Catlin G."/>
            <person name="Gearing A.J.H."/>
            <person name="Clements J.M."/>
        </authorList>
    </citation>
    <scope>NUCLEOTIDE SEQUENCE [MRNA] (ISOFORM 1)</scope>
    <scope>TISSUE SPECIFICITY</scope>
    <source>
        <tissue>Mammary gland</tissue>
    </source>
</reference>
<reference key="2">
    <citation type="journal article" date="1997" name="J. Biol. Chem.">
        <title>Identification and characterization of a novel human matrix metalloproteinase with unique structural characteristics, chromosomal location and tissue distribution.</title>
        <authorList>
            <person name="Pendas A.M."/>
            <person name="Knaeuper V.V."/>
            <person name="Puente X.S."/>
            <person name="Llano E."/>
            <person name="Mattei M.-G."/>
            <person name="Apte S."/>
            <person name="Murphy G."/>
            <person name="Lopez-Otin C."/>
        </authorList>
    </citation>
    <scope>NUCLEOTIDE SEQUENCE [MRNA] (ISOFORM 1)</scope>
    <source>
        <tissue>Liver</tissue>
    </source>
</reference>
<reference key="3">
    <citation type="journal article" date="1997" name="Immunol. Lett.">
        <title>The matrix metalloproteinase RASI-1 is expressed in synovial blood vessels of a rheumatoid arthritis patient.</title>
        <authorList>
            <person name="Kolb C."/>
            <person name="Mauch S."/>
            <person name="Peter H.-H."/>
            <person name="Krawinkel U."/>
            <person name="Sedlacek R."/>
        </authorList>
    </citation>
    <scope>NUCLEOTIDE SEQUENCE [MRNA] (ISOFORM 1)</scope>
    <source>
        <tissue>Rheumatoid arthritic synovial fluid</tissue>
    </source>
</reference>
<reference key="4">
    <citation type="journal article" date="1998" name="Immunobiology">
        <title>Matrix metalloproteinase MMP-19 (RASI-1) is expressed on the surface of activated peripheral blood mononuclear cells and is detected as an autoantigen in rheumatoid arthritis.</title>
        <authorList>
            <person name="Sedlacek R."/>
            <person name="Mauch S."/>
            <person name="Kolb B."/>
            <person name="Schaetzlein C."/>
            <person name="Eibel H."/>
            <person name="Peter H.-H."/>
            <person name="Schmitt J."/>
            <person name="Krawinkel U."/>
        </authorList>
    </citation>
    <scope>NUCLEOTIDE SEQUENCE [MRNA] (ISOFORM 1)</scope>
    <source>
        <tissue>Rheumatoid arthritic synovial fluid</tissue>
    </source>
</reference>
<reference key="5">
    <citation type="submission" date="1995-10" db="EMBL/GenBank/DDBJ databases">
        <authorList>
            <person name="Mauch S."/>
            <person name="Sedlacek R."/>
            <person name="Krawinkel U."/>
            <person name="Schaetzlein C."/>
        </authorList>
    </citation>
    <scope>NUCLEOTIDE SEQUENCE [MRNA] (ISOFORMS 1; 2 AND 3)</scope>
</reference>
<reference key="6">
    <citation type="journal article" date="2004" name="Nat. Genet.">
        <title>Complete sequencing and characterization of 21,243 full-length human cDNAs.</title>
        <authorList>
            <person name="Ota T."/>
            <person name="Suzuki Y."/>
            <person name="Nishikawa T."/>
            <person name="Otsuki T."/>
            <person name="Sugiyama T."/>
            <person name="Irie R."/>
            <person name="Wakamatsu A."/>
            <person name="Hayashi K."/>
            <person name="Sato H."/>
            <person name="Nagai K."/>
            <person name="Kimura K."/>
            <person name="Makita H."/>
            <person name="Sekine M."/>
            <person name="Obayashi M."/>
            <person name="Nishi T."/>
            <person name="Shibahara T."/>
            <person name="Tanaka T."/>
            <person name="Ishii S."/>
            <person name="Yamamoto J."/>
            <person name="Saito K."/>
            <person name="Kawai Y."/>
            <person name="Isono Y."/>
            <person name="Nakamura Y."/>
            <person name="Nagahari K."/>
            <person name="Murakami K."/>
            <person name="Yasuda T."/>
            <person name="Iwayanagi T."/>
            <person name="Wagatsuma M."/>
            <person name="Shiratori A."/>
            <person name="Sudo H."/>
            <person name="Hosoiri T."/>
            <person name="Kaku Y."/>
            <person name="Kodaira H."/>
            <person name="Kondo H."/>
            <person name="Sugawara M."/>
            <person name="Takahashi M."/>
            <person name="Kanda K."/>
            <person name="Yokoi T."/>
            <person name="Furuya T."/>
            <person name="Kikkawa E."/>
            <person name="Omura Y."/>
            <person name="Abe K."/>
            <person name="Kamihara K."/>
            <person name="Katsuta N."/>
            <person name="Sato K."/>
            <person name="Tanikawa M."/>
            <person name="Yamazaki M."/>
            <person name="Ninomiya K."/>
            <person name="Ishibashi T."/>
            <person name="Yamashita H."/>
            <person name="Murakawa K."/>
            <person name="Fujimori K."/>
            <person name="Tanai H."/>
            <person name="Kimata M."/>
            <person name="Watanabe M."/>
            <person name="Hiraoka S."/>
            <person name="Chiba Y."/>
            <person name="Ishida S."/>
            <person name="Ono Y."/>
            <person name="Takiguchi S."/>
            <person name="Watanabe S."/>
            <person name="Yosida M."/>
            <person name="Hotuta T."/>
            <person name="Kusano J."/>
            <person name="Kanehori K."/>
            <person name="Takahashi-Fujii A."/>
            <person name="Hara H."/>
            <person name="Tanase T.-O."/>
            <person name="Nomura Y."/>
            <person name="Togiya S."/>
            <person name="Komai F."/>
            <person name="Hara R."/>
            <person name="Takeuchi K."/>
            <person name="Arita M."/>
            <person name="Imose N."/>
            <person name="Musashino K."/>
            <person name="Yuuki H."/>
            <person name="Oshima A."/>
            <person name="Sasaki N."/>
            <person name="Aotsuka S."/>
            <person name="Yoshikawa Y."/>
            <person name="Matsunawa H."/>
            <person name="Ichihara T."/>
            <person name="Shiohata N."/>
            <person name="Sano S."/>
            <person name="Moriya S."/>
            <person name="Momiyama H."/>
            <person name="Satoh N."/>
            <person name="Takami S."/>
            <person name="Terashima Y."/>
            <person name="Suzuki O."/>
            <person name="Nakagawa S."/>
            <person name="Senoh A."/>
            <person name="Mizoguchi H."/>
            <person name="Goto Y."/>
            <person name="Shimizu F."/>
            <person name="Wakebe H."/>
            <person name="Hishigaki H."/>
            <person name="Watanabe T."/>
            <person name="Sugiyama A."/>
            <person name="Takemoto M."/>
            <person name="Kawakami B."/>
            <person name="Yamazaki M."/>
            <person name="Watanabe K."/>
            <person name="Kumagai A."/>
            <person name="Itakura S."/>
            <person name="Fukuzumi Y."/>
            <person name="Fujimori Y."/>
            <person name="Komiyama M."/>
            <person name="Tashiro H."/>
            <person name="Tanigami A."/>
            <person name="Fujiwara T."/>
            <person name="Ono T."/>
            <person name="Yamada K."/>
            <person name="Fujii Y."/>
            <person name="Ozaki K."/>
            <person name="Hirao M."/>
            <person name="Ohmori Y."/>
            <person name="Kawabata A."/>
            <person name="Hikiji T."/>
            <person name="Kobatake N."/>
            <person name="Inagaki H."/>
            <person name="Ikema Y."/>
            <person name="Okamoto S."/>
            <person name="Okitani R."/>
            <person name="Kawakami T."/>
            <person name="Noguchi S."/>
            <person name="Itoh T."/>
            <person name="Shigeta K."/>
            <person name="Senba T."/>
            <person name="Matsumura K."/>
            <person name="Nakajima Y."/>
            <person name="Mizuno T."/>
            <person name="Morinaga M."/>
            <person name="Sasaki M."/>
            <person name="Togashi T."/>
            <person name="Oyama M."/>
            <person name="Hata H."/>
            <person name="Watanabe M."/>
            <person name="Komatsu T."/>
            <person name="Mizushima-Sugano J."/>
            <person name="Satoh T."/>
            <person name="Shirai Y."/>
            <person name="Takahashi Y."/>
            <person name="Nakagawa K."/>
            <person name="Okumura K."/>
            <person name="Nagase T."/>
            <person name="Nomura N."/>
            <person name="Kikuchi H."/>
            <person name="Masuho Y."/>
            <person name="Yamashita R."/>
            <person name="Nakai K."/>
            <person name="Yada T."/>
            <person name="Nakamura Y."/>
            <person name="Ohara O."/>
            <person name="Isogai T."/>
            <person name="Sugano S."/>
        </authorList>
    </citation>
    <scope>NUCLEOTIDE SEQUENCE [LARGE SCALE MRNA] (ISOFORM 4)</scope>
    <source>
        <tissue>Thymus</tissue>
    </source>
</reference>
<reference key="7">
    <citation type="submission" date="2004-08" db="EMBL/GenBank/DDBJ databases">
        <authorList>
            <consortium name="NIEHS SNPs program"/>
        </authorList>
    </citation>
    <scope>NUCLEOTIDE SEQUENCE [GENOMIC DNA]</scope>
    <scope>VARIANTS CYS-103; THR-488 AND MET-491</scope>
</reference>
<reference key="8">
    <citation type="journal article" date="2006" name="Nature">
        <title>The finished DNA sequence of human chromosome 12.</title>
        <authorList>
            <person name="Scherer S.E."/>
            <person name="Muzny D.M."/>
            <person name="Buhay C.J."/>
            <person name="Chen R."/>
            <person name="Cree A."/>
            <person name="Ding Y."/>
            <person name="Dugan-Rocha S."/>
            <person name="Gill R."/>
            <person name="Gunaratne P."/>
            <person name="Harris R.A."/>
            <person name="Hawes A.C."/>
            <person name="Hernandez J."/>
            <person name="Hodgson A.V."/>
            <person name="Hume J."/>
            <person name="Jackson A."/>
            <person name="Khan Z.M."/>
            <person name="Kovar-Smith C."/>
            <person name="Lewis L.R."/>
            <person name="Lozado R.J."/>
            <person name="Metzker M.L."/>
            <person name="Milosavljevic A."/>
            <person name="Miner G.R."/>
            <person name="Montgomery K.T."/>
            <person name="Morgan M.B."/>
            <person name="Nazareth L.V."/>
            <person name="Scott G."/>
            <person name="Sodergren E."/>
            <person name="Song X.-Z."/>
            <person name="Steffen D."/>
            <person name="Lovering R.C."/>
            <person name="Wheeler D.A."/>
            <person name="Worley K.C."/>
            <person name="Yuan Y."/>
            <person name="Zhang Z."/>
            <person name="Adams C.Q."/>
            <person name="Ansari-Lari M.A."/>
            <person name="Ayele M."/>
            <person name="Brown M.J."/>
            <person name="Chen G."/>
            <person name="Chen Z."/>
            <person name="Clerc-Blankenburg K.P."/>
            <person name="Davis C."/>
            <person name="Delgado O."/>
            <person name="Dinh H.H."/>
            <person name="Draper H."/>
            <person name="Gonzalez-Garay M.L."/>
            <person name="Havlak P."/>
            <person name="Jackson L.R."/>
            <person name="Jacob L.S."/>
            <person name="Kelly S.H."/>
            <person name="Li L."/>
            <person name="Li Z."/>
            <person name="Liu J."/>
            <person name="Liu W."/>
            <person name="Lu J."/>
            <person name="Maheshwari M."/>
            <person name="Nguyen B.-V."/>
            <person name="Okwuonu G.O."/>
            <person name="Pasternak S."/>
            <person name="Perez L.M."/>
            <person name="Plopper F.J.H."/>
            <person name="Santibanez J."/>
            <person name="Shen H."/>
            <person name="Tabor P.E."/>
            <person name="Verduzco D."/>
            <person name="Waldron L."/>
            <person name="Wang Q."/>
            <person name="Williams G.A."/>
            <person name="Zhang J."/>
            <person name="Zhou J."/>
            <person name="Allen C.C."/>
            <person name="Amin A.G."/>
            <person name="Anyalebechi V."/>
            <person name="Bailey M."/>
            <person name="Barbaria J.A."/>
            <person name="Bimage K.E."/>
            <person name="Bryant N.P."/>
            <person name="Burch P.E."/>
            <person name="Burkett C.E."/>
            <person name="Burrell K.L."/>
            <person name="Calderon E."/>
            <person name="Cardenas V."/>
            <person name="Carter K."/>
            <person name="Casias K."/>
            <person name="Cavazos I."/>
            <person name="Cavazos S.R."/>
            <person name="Ceasar H."/>
            <person name="Chacko J."/>
            <person name="Chan S.N."/>
            <person name="Chavez D."/>
            <person name="Christopoulos C."/>
            <person name="Chu J."/>
            <person name="Cockrell R."/>
            <person name="Cox C.D."/>
            <person name="Dang M."/>
            <person name="Dathorne S.R."/>
            <person name="David R."/>
            <person name="Davis C.M."/>
            <person name="Davy-Carroll L."/>
            <person name="Deshazo D.R."/>
            <person name="Donlin J.E."/>
            <person name="D'Souza L."/>
            <person name="Eaves K.A."/>
            <person name="Egan A."/>
            <person name="Emery-Cohen A.J."/>
            <person name="Escotto M."/>
            <person name="Flagg N."/>
            <person name="Forbes L.D."/>
            <person name="Gabisi A.M."/>
            <person name="Garza M."/>
            <person name="Hamilton C."/>
            <person name="Henderson N."/>
            <person name="Hernandez O."/>
            <person name="Hines S."/>
            <person name="Hogues M.E."/>
            <person name="Huang M."/>
            <person name="Idlebird D.G."/>
            <person name="Johnson R."/>
            <person name="Jolivet A."/>
            <person name="Jones S."/>
            <person name="Kagan R."/>
            <person name="King L.M."/>
            <person name="Leal B."/>
            <person name="Lebow H."/>
            <person name="Lee S."/>
            <person name="LeVan J.M."/>
            <person name="Lewis L.C."/>
            <person name="London P."/>
            <person name="Lorensuhewa L.M."/>
            <person name="Loulseged H."/>
            <person name="Lovett D.A."/>
            <person name="Lucier A."/>
            <person name="Lucier R.L."/>
            <person name="Ma J."/>
            <person name="Madu R.C."/>
            <person name="Mapua P."/>
            <person name="Martindale A.D."/>
            <person name="Martinez E."/>
            <person name="Massey E."/>
            <person name="Mawhiney S."/>
            <person name="Meador M.G."/>
            <person name="Mendez S."/>
            <person name="Mercado C."/>
            <person name="Mercado I.C."/>
            <person name="Merritt C.E."/>
            <person name="Miner Z.L."/>
            <person name="Minja E."/>
            <person name="Mitchell T."/>
            <person name="Mohabbat F."/>
            <person name="Mohabbat K."/>
            <person name="Montgomery B."/>
            <person name="Moore N."/>
            <person name="Morris S."/>
            <person name="Munidasa M."/>
            <person name="Ngo R.N."/>
            <person name="Nguyen N.B."/>
            <person name="Nickerson E."/>
            <person name="Nwaokelemeh O.O."/>
            <person name="Nwokenkwo S."/>
            <person name="Obregon M."/>
            <person name="Oguh M."/>
            <person name="Oragunye N."/>
            <person name="Oviedo R.J."/>
            <person name="Parish B.J."/>
            <person name="Parker D.N."/>
            <person name="Parrish J."/>
            <person name="Parks K.L."/>
            <person name="Paul H.A."/>
            <person name="Payton B.A."/>
            <person name="Perez A."/>
            <person name="Perrin W."/>
            <person name="Pickens A."/>
            <person name="Primus E.L."/>
            <person name="Pu L.-L."/>
            <person name="Puazo M."/>
            <person name="Quiles M.M."/>
            <person name="Quiroz J.B."/>
            <person name="Rabata D."/>
            <person name="Reeves K."/>
            <person name="Ruiz S.J."/>
            <person name="Shao H."/>
            <person name="Sisson I."/>
            <person name="Sonaike T."/>
            <person name="Sorelle R.P."/>
            <person name="Sutton A.E."/>
            <person name="Svatek A.F."/>
            <person name="Svetz L.A."/>
            <person name="Tamerisa K.S."/>
            <person name="Taylor T.R."/>
            <person name="Teague B."/>
            <person name="Thomas N."/>
            <person name="Thorn R.D."/>
            <person name="Trejos Z.Y."/>
            <person name="Trevino B.K."/>
            <person name="Ukegbu O.N."/>
            <person name="Urban J.B."/>
            <person name="Vasquez L.I."/>
            <person name="Vera V.A."/>
            <person name="Villasana D.M."/>
            <person name="Wang L."/>
            <person name="Ward-Moore S."/>
            <person name="Warren J.T."/>
            <person name="Wei X."/>
            <person name="White F."/>
            <person name="Williamson A.L."/>
            <person name="Wleczyk R."/>
            <person name="Wooden H.S."/>
            <person name="Wooden S.H."/>
            <person name="Yen J."/>
            <person name="Yoon L."/>
            <person name="Yoon V."/>
            <person name="Zorrilla S.E."/>
            <person name="Nelson D."/>
            <person name="Kucherlapati R."/>
            <person name="Weinstock G."/>
            <person name="Gibbs R.A."/>
        </authorList>
    </citation>
    <scope>NUCLEOTIDE SEQUENCE [LARGE SCALE GENOMIC DNA]</scope>
</reference>
<reference key="9">
    <citation type="journal article" date="2004" name="Genome Res.">
        <title>The status, quality, and expansion of the NIH full-length cDNA project: the Mammalian Gene Collection (MGC).</title>
        <authorList>
            <consortium name="The MGC Project Team"/>
        </authorList>
    </citation>
    <scope>NUCLEOTIDE SEQUENCE [LARGE SCALE MRNA] (ISOFORM 1)</scope>
</reference>
<reference key="10">
    <citation type="journal article" date="2000" name="J. Biol. Chem.">
        <title>Biochemical characterization of the catalytic domain of human matrix metalloproteinase 19. Evidence for a role as a potent basement membrane degrading enzyme.</title>
        <authorList>
            <person name="Stracke J.O."/>
            <person name="Hutton M."/>
            <person name="Stewart M."/>
            <person name="Pendas A.M."/>
            <person name="Smith B."/>
            <person name="Lopez-Otin C."/>
            <person name="Murphy G."/>
            <person name="Knaeuper V."/>
        </authorList>
    </citation>
    <scope>PROTEIN SEQUENCE OF N-TERMINUS</scope>
    <scope>FUNCTION</scope>
    <scope>MUTAGENESIS</scope>
</reference>
<reference key="11">
    <citation type="journal article" date="2000" name="FEBS Lett.">
        <title>Matrix metalloproteinases 19 and 20 cleave aggrecan and cartilage oligomeric matrix protein (COMP).</title>
        <authorList>
            <person name="Stracke J.O."/>
            <person name="Fosang A.J."/>
            <person name="Last K."/>
            <person name="Mercuri F.A."/>
            <person name="Pendas A.M."/>
            <person name="Llano E."/>
            <person name="Perris R."/>
            <person name="Di Cesare P.E."/>
            <person name="Murphy G."/>
            <person name="Knaeuper V."/>
        </authorList>
    </citation>
    <scope>FUNCTION</scope>
</reference>
<reference key="12">
    <citation type="journal article" date="2014" name="Cell">
        <title>A secreted tyrosine kinase acts in the extracellular environment.</title>
        <authorList>
            <person name="Bordoli M.R."/>
            <person name="Yum J."/>
            <person name="Breitkopf S.B."/>
            <person name="Thon J.N."/>
            <person name="Italiano J.E. Jr."/>
            <person name="Xiao J."/>
            <person name="Worby C."/>
            <person name="Wong S.K."/>
            <person name="Lin G."/>
            <person name="Edenius M."/>
            <person name="Keller T.L."/>
            <person name="Asara J.M."/>
            <person name="Dixon J.E."/>
            <person name="Yeo C.Y."/>
            <person name="Whitman M."/>
        </authorList>
    </citation>
    <scope>PHOSPHORYLATION</scope>
</reference>
<reference key="13">
    <citation type="journal article" date="2015" name="Hum. Mutat.">
        <title>Heterozygous triplication of upstream regulatory sequences leads to dysregulation of matrix metalloproteinase 19 in patients with cavitary optic disc anomaly.</title>
        <authorList>
            <person name="Hazlewood R.J."/>
            <person name="Roos B.R."/>
            <person name="Solivan-Timpe F."/>
            <person name="Honkanen R.A."/>
            <person name="Jampol L.M."/>
            <person name="Gieser S.C."/>
            <person name="Meyer K.J."/>
            <person name="Mullins R.F."/>
            <person name="Kuehn M.H."/>
            <person name="Scheetz T.E."/>
            <person name="Kwon Y.H."/>
            <person name="Alward W.L."/>
            <person name="Stone E.M."/>
            <person name="Fingert J.H."/>
        </authorList>
    </citation>
    <scope>INVOLVEMENT IN CODA</scope>
</reference>
<proteinExistence type="evidence at protein level"/>
<evidence type="ECO:0000250" key="1"/>
<evidence type="ECO:0000255" key="2"/>
<evidence type="ECO:0000255" key="3">
    <source>
        <dbReference type="PROSITE-ProRule" id="PRU10095"/>
    </source>
</evidence>
<evidence type="ECO:0000256" key="4">
    <source>
        <dbReference type="SAM" id="MobiDB-lite"/>
    </source>
</evidence>
<evidence type="ECO:0000269" key="5">
    <source>
    </source>
</evidence>
<evidence type="ECO:0000269" key="6">
    <source>
    </source>
</evidence>
<evidence type="ECO:0000269" key="7">
    <source>
    </source>
</evidence>
<evidence type="ECO:0000269" key="8">
    <source>
    </source>
</evidence>
<evidence type="ECO:0000269" key="9">
    <source>
    </source>
</evidence>
<evidence type="ECO:0000269" key="10">
    <source>
    </source>
</evidence>
<evidence type="ECO:0000269" key="11">
    <source ref="7"/>
</evidence>
<evidence type="ECO:0000303" key="12">
    <source>
    </source>
</evidence>
<evidence type="ECO:0000303" key="13">
    <source ref="5"/>
</evidence>
<evidence type="ECO:0000305" key="14"/>
<dbReference type="EC" id="3.4.24.-"/>
<dbReference type="EMBL" id="Y08622">
    <property type="protein sequence ID" value="CAA69913.1"/>
    <property type="molecule type" value="mRNA"/>
</dbReference>
<dbReference type="EMBL" id="X92521">
    <property type="protein sequence ID" value="CAA63299.1"/>
    <property type="molecule type" value="mRNA"/>
</dbReference>
<dbReference type="EMBL" id="U37791">
    <property type="protein sequence ID" value="AAC51521.1"/>
    <property type="molecule type" value="mRNA"/>
</dbReference>
<dbReference type="EMBL" id="U38321">
    <property type="protein sequence ID" value="AAB63008.1"/>
    <property type="molecule type" value="mRNA"/>
</dbReference>
<dbReference type="EMBL" id="U38431">
    <property type="protein sequence ID" value="AAC99995.1"/>
    <property type="status" value="ALT_SEQ"/>
    <property type="molecule type" value="mRNA"/>
</dbReference>
<dbReference type="EMBL" id="U38322">
    <property type="protein sequence ID" value="AAB63009.1"/>
    <property type="molecule type" value="mRNA"/>
</dbReference>
<dbReference type="EMBL" id="AK303202">
    <property type="protein sequence ID" value="BAG64292.1"/>
    <property type="molecule type" value="mRNA"/>
</dbReference>
<dbReference type="EMBL" id="AY706993">
    <property type="protein sequence ID" value="AAT97983.1"/>
    <property type="molecule type" value="Genomic_DNA"/>
</dbReference>
<dbReference type="EMBL" id="AC023055">
    <property type="status" value="NOT_ANNOTATED_CDS"/>
    <property type="molecule type" value="Genomic_DNA"/>
</dbReference>
<dbReference type="EMBL" id="BC050368">
    <property type="protein sequence ID" value="AAH50368.1"/>
    <property type="molecule type" value="mRNA"/>
</dbReference>
<dbReference type="CCDS" id="CCDS61146.1">
    <molecule id="Q99542-5"/>
</dbReference>
<dbReference type="CCDS" id="CCDS8895.1">
    <molecule id="Q99542-1"/>
</dbReference>
<dbReference type="PIR" id="JC5082">
    <property type="entry name" value="JC5082"/>
</dbReference>
<dbReference type="RefSeq" id="NP_001259030.1">
    <molecule id="Q99542-5"/>
    <property type="nucleotide sequence ID" value="NM_001272101.2"/>
</dbReference>
<dbReference type="RefSeq" id="NP_002420.1">
    <molecule id="Q99542-1"/>
    <property type="nucleotide sequence ID" value="NM_002429.6"/>
</dbReference>
<dbReference type="SMR" id="Q99542"/>
<dbReference type="BioGRID" id="110470">
    <property type="interactions" value="11"/>
</dbReference>
<dbReference type="FunCoup" id="Q99542">
    <property type="interactions" value="116"/>
</dbReference>
<dbReference type="IntAct" id="Q99542">
    <property type="interactions" value="8"/>
</dbReference>
<dbReference type="STRING" id="9606.ENSP00000313437"/>
<dbReference type="BindingDB" id="Q99542"/>
<dbReference type="ChEMBL" id="CHEMBL1938214"/>
<dbReference type="DrugBank" id="DB00786">
    <property type="generic name" value="Marimastat"/>
</dbReference>
<dbReference type="MEROPS" id="M10.021"/>
<dbReference type="GlyCosmos" id="Q99542">
    <property type="glycosylation" value="2 sites, 1 glycan"/>
</dbReference>
<dbReference type="GlyGen" id="Q99542">
    <property type="glycosylation" value="2 sites, 1 O-linked glycan (1 site)"/>
</dbReference>
<dbReference type="iPTMnet" id="Q99542"/>
<dbReference type="PhosphoSitePlus" id="Q99542"/>
<dbReference type="BioMuta" id="MMP19"/>
<dbReference type="DMDM" id="12643345"/>
<dbReference type="MassIVE" id="Q99542"/>
<dbReference type="PaxDb" id="9606-ENSP00000313437"/>
<dbReference type="PeptideAtlas" id="Q99542"/>
<dbReference type="ProteomicsDB" id="5645"/>
<dbReference type="ProteomicsDB" id="78315">
    <molecule id="Q99542-1"/>
</dbReference>
<dbReference type="ProteomicsDB" id="78316">
    <molecule id="Q99542-3"/>
</dbReference>
<dbReference type="Antibodypedia" id="2017">
    <property type="antibodies" value="478 antibodies from 37 providers"/>
</dbReference>
<dbReference type="DNASU" id="4327"/>
<dbReference type="Ensembl" id="ENST00000322569.9">
    <molecule id="Q99542-1"/>
    <property type="protein sequence ID" value="ENSP00000313437.4"/>
    <property type="gene ID" value="ENSG00000123342.16"/>
</dbReference>
<dbReference type="Ensembl" id="ENST00000409200.7">
    <molecule id="Q99542-5"/>
    <property type="protein sequence ID" value="ENSP00000386625.3"/>
    <property type="gene ID" value="ENSG00000123342.16"/>
</dbReference>
<dbReference type="Ensembl" id="ENST00000552872.5">
    <molecule id="Q99542-4"/>
    <property type="protein sequence ID" value="ENSP00000446776.1"/>
    <property type="gene ID" value="ENSG00000123342.16"/>
</dbReference>
<dbReference type="GeneID" id="4327"/>
<dbReference type="KEGG" id="hsa:4327"/>
<dbReference type="MANE-Select" id="ENST00000322569.9">
    <property type="protein sequence ID" value="ENSP00000313437.4"/>
    <property type="RefSeq nucleotide sequence ID" value="NM_002429.6"/>
    <property type="RefSeq protein sequence ID" value="NP_002420.1"/>
</dbReference>
<dbReference type="UCSC" id="uc001sib.5">
    <molecule id="Q99542-1"/>
    <property type="organism name" value="human"/>
</dbReference>
<dbReference type="AGR" id="HGNC:7165"/>
<dbReference type="CTD" id="4327"/>
<dbReference type="DisGeNET" id="4327"/>
<dbReference type="GeneCards" id="MMP19"/>
<dbReference type="HGNC" id="HGNC:7165">
    <property type="gene designation" value="MMP19"/>
</dbReference>
<dbReference type="HPA" id="ENSG00000123342">
    <property type="expression patterns" value="Tissue enhanced (adipose)"/>
</dbReference>
<dbReference type="MalaCards" id="MMP19"/>
<dbReference type="MIM" id="601807">
    <property type="type" value="gene"/>
</dbReference>
<dbReference type="MIM" id="611543">
    <property type="type" value="phenotype"/>
</dbReference>
<dbReference type="neXtProt" id="NX_Q99542"/>
<dbReference type="OpenTargets" id="ENSG00000123342"/>
<dbReference type="Orphanet" id="464760">
    <property type="disease" value="Familial cavitary optic disc anomaly"/>
</dbReference>
<dbReference type="PharmGKB" id="PA30876"/>
<dbReference type="VEuPathDB" id="HostDB:ENSG00000123342"/>
<dbReference type="eggNOG" id="KOG1565">
    <property type="taxonomic scope" value="Eukaryota"/>
</dbReference>
<dbReference type="GeneTree" id="ENSGT00940000158593"/>
<dbReference type="HOGENOM" id="CLU_015489_8_3_1"/>
<dbReference type="InParanoid" id="Q99542"/>
<dbReference type="OMA" id="CRPQTID"/>
<dbReference type="OrthoDB" id="406838at2759"/>
<dbReference type="PAN-GO" id="Q99542">
    <property type="GO annotations" value="4 GO annotations based on evolutionary models"/>
</dbReference>
<dbReference type="PhylomeDB" id="Q99542"/>
<dbReference type="TreeFam" id="TF315428"/>
<dbReference type="PathwayCommons" id="Q99542"/>
<dbReference type="Reactome" id="R-HSA-1442490">
    <property type="pathway name" value="Collagen degradation"/>
</dbReference>
<dbReference type="Reactome" id="R-HSA-1474228">
    <property type="pathway name" value="Degradation of the extracellular matrix"/>
</dbReference>
<dbReference type="SignaLink" id="Q99542"/>
<dbReference type="SIGNOR" id="Q99542"/>
<dbReference type="BioGRID-ORCS" id="4327">
    <property type="hits" value="11 hits in 1167 CRISPR screens"/>
</dbReference>
<dbReference type="ChiTaRS" id="MMP19">
    <property type="organism name" value="human"/>
</dbReference>
<dbReference type="GeneWiki" id="MMP19"/>
<dbReference type="GenomeRNAi" id="4327"/>
<dbReference type="Pharos" id="Q99542">
    <property type="development level" value="Tbio"/>
</dbReference>
<dbReference type="PRO" id="PR:Q99542"/>
<dbReference type="Proteomes" id="UP000005640">
    <property type="component" value="Chromosome 12"/>
</dbReference>
<dbReference type="RNAct" id="Q99542">
    <property type="molecule type" value="protein"/>
</dbReference>
<dbReference type="Bgee" id="ENSG00000123342">
    <property type="expression patterns" value="Expressed in left uterine tube and 163 other cell types or tissues"/>
</dbReference>
<dbReference type="ExpressionAtlas" id="Q99542">
    <property type="expression patterns" value="baseline and differential"/>
</dbReference>
<dbReference type="GO" id="GO:0031012">
    <property type="term" value="C:extracellular matrix"/>
    <property type="evidence" value="ECO:0000303"/>
    <property type="project" value="UniProtKB"/>
</dbReference>
<dbReference type="GO" id="GO:0005576">
    <property type="term" value="C:extracellular region"/>
    <property type="evidence" value="ECO:0000304"/>
    <property type="project" value="Reactome"/>
</dbReference>
<dbReference type="GO" id="GO:0005615">
    <property type="term" value="C:extracellular space"/>
    <property type="evidence" value="ECO:0000318"/>
    <property type="project" value="GO_Central"/>
</dbReference>
<dbReference type="GO" id="GO:0004222">
    <property type="term" value="F:metalloendopeptidase activity"/>
    <property type="evidence" value="ECO:0000269"/>
    <property type="project" value="Reactome"/>
</dbReference>
<dbReference type="GO" id="GO:0004252">
    <property type="term" value="F:serine-type endopeptidase activity"/>
    <property type="evidence" value="ECO:0000304"/>
    <property type="project" value="Reactome"/>
</dbReference>
<dbReference type="GO" id="GO:0008270">
    <property type="term" value="F:zinc ion binding"/>
    <property type="evidence" value="ECO:0007669"/>
    <property type="project" value="InterPro"/>
</dbReference>
<dbReference type="GO" id="GO:0001525">
    <property type="term" value="P:angiogenesis"/>
    <property type="evidence" value="ECO:0007669"/>
    <property type="project" value="UniProtKB-KW"/>
</dbReference>
<dbReference type="GO" id="GO:0030154">
    <property type="term" value="P:cell differentiation"/>
    <property type="evidence" value="ECO:0007669"/>
    <property type="project" value="UniProtKB-KW"/>
</dbReference>
<dbReference type="GO" id="GO:0030574">
    <property type="term" value="P:collagen catabolic process"/>
    <property type="evidence" value="ECO:0000318"/>
    <property type="project" value="GO_Central"/>
</dbReference>
<dbReference type="GO" id="GO:0022617">
    <property type="term" value="P:extracellular matrix disassembly"/>
    <property type="evidence" value="ECO:0000304"/>
    <property type="project" value="Reactome"/>
</dbReference>
<dbReference type="GO" id="GO:0030198">
    <property type="term" value="P:extracellular matrix organization"/>
    <property type="evidence" value="ECO:0000318"/>
    <property type="project" value="GO_Central"/>
</dbReference>
<dbReference type="GO" id="GO:0001554">
    <property type="term" value="P:luteolysis"/>
    <property type="evidence" value="ECO:0007669"/>
    <property type="project" value="Ensembl"/>
</dbReference>
<dbReference type="GO" id="GO:0001541">
    <property type="term" value="P:ovarian follicle development"/>
    <property type="evidence" value="ECO:0007669"/>
    <property type="project" value="Ensembl"/>
</dbReference>
<dbReference type="GO" id="GO:0001542">
    <property type="term" value="P:ovulation from ovarian follicle"/>
    <property type="evidence" value="ECO:0007669"/>
    <property type="project" value="Ensembl"/>
</dbReference>
<dbReference type="GO" id="GO:0006508">
    <property type="term" value="P:proteolysis"/>
    <property type="evidence" value="ECO:0000303"/>
    <property type="project" value="UniProtKB"/>
</dbReference>
<dbReference type="GO" id="GO:0051591">
    <property type="term" value="P:response to cAMP"/>
    <property type="evidence" value="ECO:0007669"/>
    <property type="project" value="Ensembl"/>
</dbReference>
<dbReference type="GO" id="GO:0009725">
    <property type="term" value="P:response to hormone"/>
    <property type="evidence" value="ECO:0007669"/>
    <property type="project" value="Ensembl"/>
</dbReference>
<dbReference type="CDD" id="cd00094">
    <property type="entry name" value="HX"/>
    <property type="match status" value="1"/>
</dbReference>
<dbReference type="CDD" id="cd04278">
    <property type="entry name" value="ZnMc_MMP"/>
    <property type="match status" value="1"/>
</dbReference>
<dbReference type="FunFam" id="2.110.10.10:FF:000008">
    <property type="entry name" value="Matrix metallopeptidase 19"/>
    <property type="match status" value="1"/>
</dbReference>
<dbReference type="FunFam" id="2.110.10.10:FF:000017">
    <property type="entry name" value="Matrix metallopeptidase 19"/>
    <property type="match status" value="1"/>
</dbReference>
<dbReference type="FunFam" id="3.40.390.10:FF:000027">
    <property type="entry name" value="Matrix metallopeptidase 19"/>
    <property type="match status" value="1"/>
</dbReference>
<dbReference type="Gene3D" id="3.40.390.10">
    <property type="entry name" value="Collagenase (Catalytic Domain)"/>
    <property type="match status" value="1"/>
</dbReference>
<dbReference type="Gene3D" id="2.110.10.10">
    <property type="entry name" value="Hemopexin-like domain"/>
    <property type="match status" value="2"/>
</dbReference>
<dbReference type="InterPro" id="IPR000585">
    <property type="entry name" value="Hemopexin-like_dom"/>
</dbReference>
<dbReference type="InterPro" id="IPR036375">
    <property type="entry name" value="Hemopexin-like_dom_sf"/>
</dbReference>
<dbReference type="InterPro" id="IPR018487">
    <property type="entry name" value="Hemopexin-like_repeat"/>
</dbReference>
<dbReference type="InterPro" id="IPR033739">
    <property type="entry name" value="M10A_MMP"/>
</dbReference>
<dbReference type="InterPro" id="IPR024079">
    <property type="entry name" value="MetalloPept_cat_dom_sf"/>
</dbReference>
<dbReference type="InterPro" id="IPR001818">
    <property type="entry name" value="Pept_M10_metallopeptidase"/>
</dbReference>
<dbReference type="InterPro" id="IPR021190">
    <property type="entry name" value="Pept_M10A"/>
</dbReference>
<dbReference type="InterPro" id="IPR006026">
    <property type="entry name" value="Peptidase_Metallo"/>
</dbReference>
<dbReference type="InterPro" id="IPR002477">
    <property type="entry name" value="Peptidoglycan-bd-like"/>
</dbReference>
<dbReference type="InterPro" id="IPR036365">
    <property type="entry name" value="PGBD-like_sf"/>
</dbReference>
<dbReference type="PANTHER" id="PTHR10201">
    <property type="entry name" value="MATRIX METALLOPROTEINASE"/>
    <property type="match status" value="1"/>
</dbReference>
<dbReference type="PANTHER" id="PTHR10201:SF166">
    <property type="entry name" value="MATRIX METALLOPROTEINASE-19"/>
    <property type="match status" value="1"/>
</dbReference>
<dbReference type="Pfam" id="PF00045">
    <property type="entry name" value="Hemopexin"/>
    <property type="match status" value="4"/>
</dbReference>
<dbReference type="Pfam" id="PF00413">
    <property type="entry name" value="Peptidase_M10"/>
    <property type="match status" value="1"/>
</dbReference>
<dbReference type="Pfam" id="PF01471">
    <property type="entry name" value="PG_binding_1"/>
    <property type="match status" value="1"/>
</dbReference>
<dbReference type="PIRSF" id="PIRSF001191">
    <property type="entry name" value="Peptidase_M10A_matrix"/>
    <property type="match status" value="1"/>
</dbReference>
<dbReference type="PRINTS" id="PR00138">
    <property type="entry name" value="MATRIXIN"/>
</dbReference>
<dbReference type="SMART" id="SM00120">
    <property type="entry name" value="HX"/>
    <property type="match status" value="4"/>
</dbReference>
<dbReference type="SMART" id="SM00235">
    <property type="entry name" value="ZnMc"/>
    <property type="match status" value="1"/>
</dbReference>
<dbReference type="SUPFAM" id="SSF50923">
    <property type="entry name" value="Hemopexin-like domain"/>
    <property type="match status" value="1"/>
</dbReference>
<dbReference type="SUPFAM" id="SSF55486">
    <property type="entry name" value="Metalloproteases ('zincins'), catalytic domain"/>
    <property type="match status" value="1"/>
</dbReference>
<dbReference type="SUPFAM" id="SSF47090">
    <property type="entry name" value="PGBD-like"/>
    <property type="match status" value="1"/>
</dbReference>
<dbReference type="PROSITE" id="PS51642">
    <property type="entry name" value="HEMOPEXIN_2"/>
    <property type="match status" value="4"/>
</dbReference>
<dbReference type="PROSITE" id="PS00142">
    <property type="entry name" value="ZINC_PROTEASE"/>
    <property type="match status" value="1"/>
</dbReference>
<accession>Q99542</accession>
<accession>B4E030</accession>
<accession>O15278</accession>
<accession>O95606</accession>
<accession>Q99580</accession>
<keyword id="KW-0025">Alternative splicing</keyword>
<keyword id="KW-0037">Angiogenesis</keyword>
<keyword id="KW-0106">Calcium</keyword>
<keyword id="KW-0177">Collagen degradation</keyword>
<keyword id="KW-0217">Developmental protein</keyword>
<keyword id="KW-0221">Differentiation</keyword>
<keyword id="KW-0903">Direct protein sequencing</keyword>
<keyword id="KW-1015">Disulfide bond</keyword>
<keyword id="KW-0272">Extracellular matrix</keyword>
<keyword id="KW-0325">Glycoprotein</keyword>
<keyword id="KW-0378">Hydrolase</keyword>
<keyword id="KW-0479">Metal-binding</keyword>
<keyword id="KW-0482">Metalloprotease</keyword>
<keyword id="KW-0597">Phosphoprotein</keyword>
<keyword id="KW-0645">Protease</keyword>
<keyword id="KW-1267">Proteomics identification</keyword>
<keyword id="KW-1185">Reference proteome</keyword>
<keyword id="KW-0677">Repeat</keyword>
<keyword id="KW-0964">Secreted</keyword>
<keyword id="KW-0732">Signal</keyword>
<keyword id="KW-0862">Zinc</keyword>
<keyword id="KW-0865">Zymogen</keyword>
<sequence length="508" mass="57357">MNCQQLWLGFLLPMTVSGRVLGLAEVAPVDYLSQYGYLQKPLEGSNNFKPEDITEALRAFQEASELPVSGQLDDATRARMRQPRCGLEDPFNQKTLKYLLLGRWRKKHLTFRILNLPSTLPPHTARAALRQAFQDWSNVAPLTFQEVQAGAADIRLSFHGRQSSYCSNTFDGPGRVLAHADIPELGSVHFDEDEFWTEGTYRGVNLRIIAAHEVGHALGLGHSRYSQALMAPVYEGYRPHFKLHPDDVAGIQALYGKKSPVIRDEEEEETELPTVPPVPTEPSPMPDPCSSELDAMMLGPRGKTYAFKGDYVWTVSDSGPGPLFRVSALWEGLPGNLDAAVYSPRTQWIHFFKGDKVWRYINFKMSPGFPKKLNRVEPNLDAALYWPLNQKVFLFKGSGYWQWDELARTDFSSYPKPIKGLFTGVPNQPSAAMSWQDGRVYFFKGKVYWRLNQQLRVEKGYPRNISHNWMHCRPRTIDTTPSGGNTTPSGTGITLDTTLSATETTFEY</sequence>
<protein>
    <recommendedName>
        <fullName>Matrix metalloproteinase-19</fullName>
        <shortName>MMP-19</shortName>
        <ecNumber>3.4.24.-</ecNumber>
    </recommendedName>
    <alternativeName>
        <fullName>Matrix metalloproteinase RASI</fullName>
    </alternativeName>
    <alternativeName>
        <fullName>Matrix metalloproteinase-18</fullName>
        <shortName>MMP-18</shortName>
    </alternativeName>
</protein>
<name>MMP19_HUMAN</name>